<comment type="function">
    <text evidence="1">Part of the ABC transporter complex LolCDE involved in the translocation of mature outer membrane-directed lipoproteins, from the inner membrane to the periplasmic chaperone, LolA. Responsible for the formation of the LolA-lipoprotein complex in an ATP-dependent manner.</text>
</comment>
<comment type="subunit">
    <text evidence="1">The complex is composed of two ATP-binding proteins (LolD) and two transmembrane proteins (LolC and LolE).</text>
</comment>
<comment type="subcellular location">
    <subcellularLocation>
        <location evidence="1">Cell inner membrane</location>
        <topology evidence="1">Peripheral membrane protein</topology>
    </subcellularLocation>
</comment>
<comment type="similarity">
    <text evidence="1">Belongs to the ABC transporter superfamily. Lipoprotein translocase (TC 3.A.1.125) family.</text>
</comment>
<comment type="sequence caution" evidence="2">
    <conflict type="erroneous initiation">
        <sequence resource="EMBL-CDS" id="CAG69398"/>
    </conflict>
</comment>
<feature type="chain" id="PRO_0000092415" description="Lipoprotein-releasing system ATP-binding protein LolD">
    <location>
        <begin position="1"/>
        <end position="228"/>
    </location>
</feature>
<feature type="domain" description="ABC transporter" evidence="1">
    <location>
        <begin position="6"/>
        <end position="225"/>
    </location>
</feature>
<feature type="binding site" evidence="1">
    <location>
        <begin position="42"/>
        <end position="49"/>
    </location>
    <ligand>
        <name>ATP</name>
        <dbReference type="ChEBI" id="CHEBI:30616"/>
    </ligand>
</feature>
<evidence type="ECO:0000255" key="1">
    <source>
        <dbReference type="HAMAP-Rule" id="MF_01708"/>
    </source>
</evidence>
<evidence type="ECO:0000305" key="2"/>
<name>LOLD_ACIAD</name>
<protein>
    <recommendedName>
        <fullName evidence="1">Lipoprotein-releasing system ATP-binding protein LolD</fullName>
        <ecNumber evidence="1">7.6.2.-</ecNumber>
    </recommendedName>
</protein>
<dbReference type="EC" id="7.6.2.-" evidence="1"/>
<dbReference type="EMBL" id="AF320001">
    <property type="protein sequence ID" value="AAG34709.1"/>
    <property type="molecule type" value="Genomic_DNA"/>
</dbReference>
<dbReference type="EMBL" id="CR543861">
    <property type="protein sequence ID" value="CAG69398.1"/>
    <property type="status" value="ALT_INIT"/>
    <property type="molecule type" value="Genomic_DNA"/>
</dbReference>
<dbReference type="RefSeq" id="WP_004928867.1">
    <property type="nucleotide sequence ID" value="NC_005966.1"/>
</dbReference>
<dbReference type="SMR" id="Q9EYM2"/>
<dbReference type="STRING" id="202950.GCA_001485005_02288"/>
<dbReference type="GeneID" id="45234919"/>
<dbReference type="KEGG" id="aci:ACIAD2640"/>
<dbReference type="eggNOG" id="COG1136">
    <property type="taxonomic scope" value="Bacteria"/>
</dbReference>
<dbReference type="HOGENOM" id="CLU_000604_1_22_6"/>
<dbReference type="OrthoDB" id="9801477at2"/>
<dbReference type="BioCyc" id="ASP62977:ACIAD_RS12010-MONOMER"/>
<dbReference type="Proteomes" id="UP000000430">
    <property type="component" value="Chromosome"/>
</dbReference>
<dbReference type="GO" id="GO:0005886">
    <property type="term" value="C:plasma membrane"/>
    <property type="evidence" value="ECO:0007669"/>
    <property type="project" value="UniProtKB-SubCell"/>
</dbReference>
<dbReference type="GO" id="GO:0005524">
    <property type="term" value="F:ATP binding"/>
    <property type="evidence" value="ECO:0007669"/>
    <property type="project" value="UniProtKB-KW"/>
</dbReference>
<dbReference type="GO" id="GO:0016887">
    <property type="term" value="F:ATP hydrolysis activity"/>
    <property type="evidence" value="ECO:0007669"/>
    <property type="project" value="InterPro"/>
</dbReference>
<dbReference type="CDD" id="cd03255">
    <property type="entry name" value="ABC_MJ0796_LolCDE_FtsE"/>
    <property type="match status" value="1"/>
</dbReference>
<dbReference type="FunFam" id="3.40.50.300:FF:000230">
    <property type="entry name" value="Lipoprotein-releasing system ATP-binding protein LolD"/>
    <property type="match status" value="1"/>
</dbReference>
<dbReference type="Gene3D" id="3.40.50.300">
    <property type="entry name" value="P-loop containing nucleotide triphosphate hydrolases"/>
    <property type="match status" value="1"/>
</dbReference>
<dbReference type="InterPro" id="IPR003593">
    <property type="entry name" value="AAA+_ATPase"/>
</dbReference>
<dbReference type="InterPro" id="IPR003439">
    <property type="entry name" value="ABC_transporter-like_ATP-bd"/>
</dbReference>
<dbReference type="InterPro" id="IPR017871">
    <property type="entry name" value="ABC_transporter-like_CS"/>
</dbReference>
<dbReference type="InterPro" id="IPR017911">
    <property type="entry name" value="MacB-like_ATP-bd"/>
</dbReference>
<dbReference type="InterPro" id="IPR027417">
    <property type="entry name" value="P-loop_NTPase"/>
</dbReference>
<dbReference type="PANTHER" id="PTHR42798:SF2">
    <property type="entry name" value="ABC TRANSPORTER ATP-BINDING PROTEIN MG467-RELATED"/>
    <property type="match status" value="1"/>
</dbReference>
<dbReference type="PANTHER" id="PTHR42798">
    <property type="entry name" value="LIPOPROTEIN-RELEASING SYSTEM ATP-BINDING PROTEIN LOLD"/>
    <property type="match status" value="1"/>
</dbReference>
<dbReference type="Pfam" id="PF00005">
    <property type="entry name" value="ABC_tran"/>
    <property type="match status" value="1"/>
</dbReference>
<dbReference type="SMART" id="SM00382">
    <property type="entry name" value="AAA"/>
    <property type="match status" value="1"/>
</dbReference>
<dbReference type="SUPFAM" id="SSF52540">
    <property type="entry name" value="P-loop containing nucleoside triphosphate hydrolases"/>
    <property type="match status" value="1"/>
</dbReference>
<dbReference type="PROSITE" id="PS00211">
    <property type="entry name" value="ABC_TRANSPORTER_1"/>
    <property type="match status" value="1"/>
</dbReference>
<dbReference type="PROSITE" id="PS50893">
    <property type="entry name" value="ABC_TRANSPORTER_2"/>
    <property type="match status" value="1"/>
</dbReference>
<dbReference type="PROSITE" id="PS51244">
    <property type="entry name" value="LOLD"/>
    <property type="match status" value="1"/>
</dbReference>
<organism>
    <name type="scientific">Acinetobacter baylyi (strain ATCC 33305 / BD413 / ADP1)</name>
    <dbReference type="NCBI Taxonomy" id="62977"/>
    <lineage>
        <taxon>Bacteria</taxon>
        <taxon>Pseudomonadati</taxon>
        <taxon>Pseudomonadota</taxon>
        <taxon>Gammaproteobacteria</taxon>
        <taxon>Moraxellales</taxon>
        <taxon>Moraxellaceae</taxon>
        <taxon>Acinetobacter</taxon>
    </lineage>
</organism>
<proteinExistence type="inferred from homology"/>
<keyword id="KW-0067">ATP-binding</keyword>
<keyword id="KW-0997">Cell inner membrane</keyword>
<keyword id="KW-1003">Cell membrane</keyword>
<keyword id="KW-0472">Membrane</keyword>
<keyword id="KW-0547">Nucleotide-binding</keyword>
<keyword id="KW-1278">Translocase</keyword>
<keyword id="KW-0813">Transport</keyword>
<accession>Q9EYM2</accession>
<accession>Q6F967</accession>
<sequence length="228" mass="25322">MSKIVLEAKDVYKHFTDGKSTVEVIKGLSLKIAAGEFVSIVGASGSGKSTLLHILGGLDQPTQGQVFLNEQRFDNLGEAERGFKRNQYLGFVYQFHHLLPEFSALENVAMPLMLRADTNYKEVKQQAEHLLDRVGLSHRLTHKPGELSGGERQRVALARALVARPAVMLADEPTGNLDRKTAFGIFELLSDLKQEFNMAMLIVTHDEQLAQSADSILHMQDGLWVDHS</sequence>
<gene>
    <name evidence="1" type="primary">lolD</name>
    <name type="ordered locus">ACIAD2640</name>
</gene>
<reference key="1">
    <citation type="journal article" date="2001" name="Appl. Environ. Microbiol.">
        <title>Natural transformation in mesophilic and thermophilic bacteria: identification and characterization of novel, closely related competence genes in Acinetobacter sp. strain BD413 and Thermus thermophilus HB27.</title>
        <authorList>
            <person name="Friedrich A."/>
            <person name="Hartsch T."/>
            <person name="Averhoff B."/>
        </authorList>
    </citation>
    <scope>NUCLEOTIDE SEQUENCE [GENOMIC DNA]</scope>
</reference>
<reference key="2">
    <citation type="journal article" date="2004" name="Nucleic Acids Res.">
        <title>Unique features revealed by the genome sequence of Acinetobacter sp. ADP1, a versatile and naturally transformation competent bacterium.</title>
        <authorList>
            <person name="Barbe V."/>
            <person name="Vallenet D."/>
            <person name="Fonknechten N."/>
            <person name="Kreimeyer A."/>
            <person name="Oztas S."/>
            <person name="Labarre L."/>
            <person name="Cruveiller S."/>
            <person name="Robert C."/>
            <person name="Duprat S."/>
            <person name="Wincker P."/>
            <person name="Ornston L.N."/>
            <person name="Weissenbach J."/>
            <person name="Marliere P."/>
            <person name="Cohen G.N."/>
            <person name="Medigue C."/>
        </authorList>
    </citation>
    <scope>NUCLEOTIDE SEQUENCE [LARGE SCALE GENOMIC DNA]</scope>
    <source>
        <strain>ATCC 33305 / BD413 / ADP1</strain>
    </source>
</reference>